<dbReference type="EC" id="1.14.11.-" evidence="1"/>
<dbReference type="EMBL" id="CP000941">
    <property type="protein sequence ID" value="ACA12610.1"/>
    <property type="molecule type" value="Genomic_DNA"/>
</dbReference>
<dbReference type="RefSeq" id="WP_004083521.1">
    <property type="nucleotide sequence ID" value="NC_010513.1"/>
</dbReference>
<dbReference type="SMR" id="B0U431"/>
<dbReference type="KEGG" id="xfm:Xfasm12_1709"/>
<dbReference type="HOGENOM" id="CLU_106663_0_0_6"/>
<dbReference type="GO" id="GO:0016706">
    <property type="term" value="F:2-oxoglutarate-dependent dioxygenase activity"/>
    <property type="evidence" value="ECO:0007669"/>
    <property type="project" value="UniProtKB-UniRule"/>
</dbReference>
<dbReference type="GO" id="GO:0005506">
    <property type="term" value="F:iron ion binding"/>
    <property type="evidence" value="ECO:0007669"/>
    <property type="project" value="UniProtKB-UniRule"/>
</dbReference>
<dbReference type="GO" id="GO:0031418">
    <property type="term" value="F:L-ascorbic acid binding"/>
    <property type="evidence" value="ECO:0007669"/>
    <property type="project" value="UniProtKB-KW"/>
</dbReference>
<dbReference type="GO" id="GO:0006974">
    <property type="term" value="P:DNA damage response"/>
    <property type="evidence" value="ECO:0007669"/>
    <property type="project" value="TreeGrafter"/>
</dbReference>
<dbReference type="GO" id="GO:0006879">
    <property type="term" value="P:intracellular iron ion homeostasis"/>
    <property type="evidence" value="ECO:0007669"/>
    <property type="project" value="TreeGrafter"/>
</dbReference>
<dbReference type="Gene3D" id="2.60.120.620">
    <property type="entry name" value="q2cbj1_9rhob like domain"/>
    <property type="match status" value="1"/>
</dbReference>
<dbReference type="Gene3D" id="4.10.860.20">
    <property type="entry name" value="Rabenosyn, Rab binding domain"/>
    <property type="match status" value="1"/>
</dbReference>
<dbReference type="HAMAP" id="MF_00657">
    <property type="entry name" value="Hydroxyl_YbiX"/>
    <property type="match status" value="1"/>
</dbReference>
<dbReference type="InterPro" id="IPR005123">
    <property type="entry name" value="Oxoglu/Fe-dep_dioxygenase_dom"/>
</dbReference>
<dbReference type="InterPro" id="IPR041097">
    <property type="entry name" value="PKHD_C"/>
</dbReference>
<dbReference type="InterPro" id="IPR023550">
    <property type="entry name" value="PKHD_hydroxylase"/>
</dbReference>
<dbReference type="InterPro" id="IPR006620">
    <property type="entry name" value="Pro_4_hyd_alph"/>
</dbReference>
<dbReference type="InterPro" id="IPR044862">
    <property type="entry name" value="Pro_4_hyd_alph_FE2OG_OXY"/>
</dbReference>
<dbReference type="NCBIfam" id="NF003974">
    <property type="entry name" value="PRK05467.1-3"/>
    <property type="match status" value="1"/>
</dbReference>
<dbReference type="NCBIfam" id="NF003975">
    <property type="entry name" value="PRK05467.1-4"/>
    <property type="match status" value="1"/>
</dbReference>
<dbReference type="PANTHER" id="PTHR41536">
    <property type="entry name" value="PKHD-TYPE HYDROXYLASE YBIX"/>
    <property type="match status" value="1"/>
</dbReference>
<dbReference type="PANTHER" id="PTHR41536:SF1">
    <property type="entry name" value="PKHD-TYPE HYDROXYLASE YBIX"/>
    <property type="match status" value="1"/>
</dbReference>
<dbReference type="Pfam" id="PF13640">
    <property type="entry name" value="2OG-FeII_Oxy_3"/>
    <property type="match status" value="1"/>
</dbReference>
<dbReference type="Pfam" id="PF18331">
    <property type="entry name" value="PKHD_C"/>
    <property type="match status" value="1"/>
</dbReference>
<dbReference type="SMART" id="SM00702">
    <property type="entry name" value="P4Hc"/>
    <property type="match status" value="1"/>
</dbReference>
<dbReference type="SUPFAM" id="SSF51197">
    <property type="entry name" value="Clavaminate synthase-like"/>
    <property type="match status" value="1"/>
</dbReference>
<dbReference type="PROSITE" id="PS51471">
    <property type="entry name" value="FE2OG_OXY"/>
    <property type="match status" value="1"/>
</dbReference>
<gene>
    <name type="ordered locus">Xfasm12_1709</name>
</gene>
<proteinExistence type="inferred from homology"/>
<reference key="1">
    <citation type="journal article" date="2010" name="J. Bacteriol.">
        <title>Whole genome sequences of two Xylella fastidiosa strains (M12 and M23) causing almond leaf scorch disease in California.</title>
        <authorList>
            <person name="Chen J."/>
            <person name="Xie G."/>
            <person name="Han S."/>
            <person name="Chertkov O."/>
            <person name="Sims D."/>
            <person name="Civerolo E.L."/>
        </authorList>
    </citation>
    <scope>NUCLEOTIDE SEQUENCE [LARGE SCALE GENOMIC DNA]</scope>
    <source>
        <strain>M12</strain>
    </source>
</reference>
<accession>B0U431</accession>
<protein>
    <recommendedName>
        <fullName evidence="1">PKHD-type hydroxylase Xfasm12_1709</fullName>
        <ecNumber evidence="1">1.14.11.-</ecNumber>
    </recommendedName>
</protein>
<evidence type="ECO:0000255" key="1">
    <source>
        <dbReference type="HAMAP-Rule" id="MF_00657"/>
    </source>
</evidence>
<organism>
    <name type="scientific">Xylella fastidiosa (strain M12)</name>
    <dbReference type="NCBI Taxonomy" id="405440"/>
    <lineage>
        <taxon>Bacteria</taxon>
        <taxon>Pseudomonadati</taxon>
        <taxon>Pseudomonadota</taxon>
        <taxon>Gammaproteobacteria</taxon>
        <taxon>Lysobacterales</taxon>
        <taxon>Lysobacteraceae</taxon>
        <taxon>Xylella</taxon>
    </lineage>
</organism>
<sequence length="230" mass="25903">MLLHIPTILSRTQATSMQERLAAANWTDGRETVGPQGAQVKHNLQLPETSPLRQELGHEILDALARSPLYFAATLPLRTLPPRFNRYQENHQYGFHVDGAVMSLPVAPDHTPASLRSDISCTLFLNDPDEYEGGELIIADTYGEHEIKLPAGDLIIYPSTSLHRVAPVTRGMRIASFFWVQSLVRQATHRHQLLELDTAIQSLTASNTDHNTILRLTNIYHNLLREWSET</sequence>
<keyword id="KW-0223">Dioxygenase</keyword>
<keyword id="KW-0408">Iron</keyword>
<keyword id="KW-0479">Metal-binding</keyword>
<keyword id="KW-0560">Oxidoreductase</keyword>
<keyword id="KW-0847">Vitamin C</keyword>
<comment type="cofactor">
    <cofactor evidence="1">
        <name>Fe(2+)</name>
        <dbReference type="ChEBI" id="CHEBI:29033"/>
    </cofactor>
    <text evidence="1">Binds 1 Fe(2+) ion per subunit.</text>
</comment>
<comment type="cofactor">
    <cofactor evidence="1">
        <name>L-ascorbate</name>
        <dbReference type="ChEBI" id="CHEBI:38290"/>
    </cofactor>
</comment>
<name>Y1709_XYLFM</name>
<feature type="chain" id="PRO_0000346534" description="PKHD-type hydroxylase Xfasm12_1709">
    <location>
        <begin position="1"/>
        <end position="230"/>
    </location>
</feature>
<feature type="domain" description="Fe2OG dioxygenase" evidence="1">
    <location>
        <begin position="78"/>
        <end position="182"/>
    </location>
</feature>
<feature type="binding site" evidence="1">
    <location>
        <position position="96"/>
    </location>
    <ligand>
        <name>Fe cation</name>
        <dbReference type="ChEBI" id="CHEBI:24875"/>
    </ligand>
</feature>
<feature type="binding site" evidence="1">
    <location>
        <position position="98"/>
    </location>
    <ligand>
        <name>Fe cation</name>
        <dbReference type="ChEBI" id="CHEBI:24875"/>
    </ligand>
</feature>
<feature type="binding site" evidence="1">
    <location>
        <position position="163"/>
    </location>
    <ligand>
        <name>Fe cation</name>
        <dbReference type="ChEBI" id="CHEBI:24875"/>
    </ligand>
</feature>
<feature type="binding site" evidence="1">
    <location>
        <position position="173"/>
    </location>
    <ligand>
        <name>2-oxoglutarate</name>
        <dbReference type="ChEBI" id="CHEBI:16810"/>
    </ligand>
</feature>